<keyword id="KW-0966">Cell projection</keyword>
<keyword id="KW-0969">Cilium</keyword>
<keyword id="KW-0175">Coiled coil</keyword>
<keyword id="KW-0963">Cytoplasm</keyword>
<keyword id="KW-0206">Cytoskeleton</keyword>
<keyword id="KW-0282">Flagellum</keyword>
<sequence>MAQPQRPYDALYDPNFTVAGPRDHYRQQTMAGGFNIERAPVYNNFFSELPHHPPSTLRLKNADRVPAFVDRNYRPAANDPNDTRQRSDALAVSGPNRPKYFRRPMLAAAEIHIKQAPPSQLPPLPSHQDLNATAPAAMGGAGGLGEPRSKTIGTQSDYRENEAQTAPWEPGYVLPAPGALTAKQAALMRRYHTDVPEVLQLKDLAFPDGLPAGLQEVTRIDKMRAKRAFEASLPPIDDVARLPLRQRMIEEWEAKEWEEREQEILSIQDKRLELLDNALQVREEELDDENRLRVEARKEAMLAGRAGKFADVQATRIKTMRQLIENRKYVEKHRKLHKPTIVERYANYGSGTYAPLQREGRFPESKPLGKEIETEGYAPVTLKGVVDLESFLPSRLLNPRVAAPQKPARLDYHQRKEAAVQRDLKAINDLLDTAKGTAGRGFGDCWPAPLQDDGGAGMGNGTLGRATSTVGKGTLGAGGSAGGAAPGGASMALLGGPSTAAASAMGPLASGVSGSPSRRVVRAIERPPTPELPQPPAVTAPQHAAVVLLQRLLRGRAAQNIMYEGRVRRQELIDELRLEEVVSADGTKIDGQPIRRPEHRDTATLRIDALVGSAVAEVAAILAETDPERRETLLAGLDVSRAHATAAAVAAAAADINASARAEAEEAAATAMAEAAAAAAAAAAAAAAAEDGGAEGAAESAAEAAAAAEAAASAAEEAYAGAVAAAAAPARAAALNLEALGISPEEAEEAAVRIQAAFKGHKARKEVAAMRARGEMLRNIMANGDEAKVVTCQAAIRGHLARKRVRQLRASQAGNEGFAGAPSASPEPAAPLPALAENQDQQEPQPQPQPSSSSGALDLADYDDHHGEASAAMLGGEPSLAVGGSREGEQQLEADAEAEAEAEAEAEAGAEAEASAQAGAEAEAEAGVEAEAEASAGAEASVGAGAEGDAEAETEAGAQAEPGPEAEAEAEAGAEAEAENGAEAEARLGGEEEGFREGEGQGGAAAGEAGPGGELAEGEGEAGEGEAAE</sequence>
<comment type="function">
    <text evidence="3">As component of a spoke-associated complex, regulates flagellar dynein activity by mediating regulatory signals between the radial spokes and dynein arms.</text>
</comment>
<comment type="subunit">
    <text evidence="3">Identified in a spoke-associated complex containing CFAP61, CFAP91 and CFAP251; the complex is associated with the radial spokes of the axoneme (PubMed:17967944). The complex associates with Calmodulin; the association is calcium sensitive (PubMed:17967944). Interacts with RSP3 (PubMed:17967944).</text>
</comment>
<comment type="subcellular location">
    <subcellularLocation>
        <location evidence="3">Cytoplasm</location>
        <location evidence="3">Cytoskeleton</location>
        <location evidence="3">Flagellum axoneme</location>
    </subcellularLocation>
</comment>
<comment type="similarity">
    <text>Belongs to the CFAP91 family.</text>
</comment>
<feature type="chain" id="PRO_0000439535" description="Cilia- and flagella-associated protein 91">
    <location>
        <begin position="1"/>
        <end position="1029"/>
    </location>
</feature>
<feature type="region of interest" description="Disordered" evidence="2">
    <location>
        <begin position="72"/>
        <end position="97"/>
    </location>
</feature>
<feature type="region of interest" description="Disordered" evidence="2">
    <location>
        <begin position="117"/>
        <end position="170"/>
    </location>
</feature>
<feature type="region of interest" description="Disordered" evidence="2">
    <location>
        <begin position="837"/>
        <end position="861"/>
    </location>
</feature>
<feature type="region of interest" description="Disordered" evidence="2">
    <location>
        <begin position="876"/>
        <end position="1029"/>
    </location>
</feature>
<feature type="coiled-coil region" evidence="1">
    <location>
        <begin position="272"/>
        <end position="299"/>
    </location>
</feature>
<feature type="compositionally biased region" description="Low complexity" evidence="2">
    <location>
        <begin position="837"/>
        <end position="854"/>
    </location>
</feature>
<feature type="compositionally biased region" description="Acidic residues" evidence="2">
    <location>
        <begin position="890"/>
        <end position="910"/>
    </location>
</feature>
<feature type="compositionally biased region" description="Low complexity" evidence="2">
    <location>
        <begin position="911"/>
        <end position="921"/>
    </location>
</feature>
<feature type="compositionally biased region" description="Acidic residues" evidence="2">
    <location>
        <begin position="922"/>
        <end position="932"/>
    </location>
</feature>
<feature type="compositionally biased region" description="Low complexity" evidence="2">
    <location>
        <begin position="933"/>
        <end position="944"/>
    </location>
</feature>
<feature type="compositionally biased region" description="Acidic residues" evidence="2">
    <location>
        <begin position="964"/>
        <end position="982"/>
    </location>
</feature>
<feature type="compositionally biased region" description="Basic and acidic residues" evidence="2">
    <location>
        <begin position="984"/>
        <end position="999"/>
    </location>
</feature>
<feature type="compositionally biased region" description="Gly residues" evidence="2">
    <location>
        <begin position="1000"/>
        <end position="1015"/>
    </location>
</feature>
<feature type="compositionally biased region" description="Acidic residues" evidence="2">
    <location>
        <begin position="1016"/>
        <end position="1029"/>
    </location>
</feature>
<reference key="1">
    <citation type="journal article" date="2007" name="Science">
        <title>The Chlamydomonas genome reveals the evolution of key animal and plant functions.</title>
        <authorList>
            <person name="Merchant S.S."/>
            <person name="Prochnik S.E."/>
            <person name="Vallon O."/>
            <person name="Harris E.H."/>
            <person name="Karpowicz S.J."/>
            <person name="Witman G.B."/>
            <person name="Terry A."/>
            <person name="Salamov A."/>
            <person name="Fritz-Laylin L.K."/>
            <person name="Marechal-Drouard L."/>
            <person name="Marshall W.F."/>
            <person name="Qu L.H."/>
            <person name="Nelson D.R."/>
            <person name="Sanderfoot A.A."/>
            <person name="Spalding M.H."/>
            <person name="Kapitonov V.V."/>
            <person name="Ren Q."/>
            <person name="Ferris P."/>
            <person name="Lindquist E."/>
            <person name="Shapiro H."/>
            <person name="Lucas S.M."/>
            <person name="Grimwood J."/>
            <person name="Schmutz J."/>
            <person name="Cardol P."/>
            <person name="Cerutti H."/>
            <person name="Chanfreau G."/>
            <person name="Chen C.L."/>
            <person name="Cognat V."/>
            <person name="Croft M.T."/>
            <person name="Dent R."/>
            <person name="Dutcher S."/>
            <person name="Fernandez E."/>
            <person name="Fukuzawa H."/>
            <person name="Gonzalez-Ballester D."/>
            <person name="Gonzalez-Halphen D."/>
            <person name="Hallmann A."/>
            <person name="Hanikenne M."/>
            <person name="Hippler M."/>
            <person name="Inwood W."/>
            <person name="Jabbari K."/>
            <person name="Kalanon M."/>
            <person name="Kuras R."/>
            <person name="Lefebvre P.A."/>
            <person name="Lemaire S.D."/>
            <person name="Lobanov A.V."/>
            <person name="Lohr M."/>
            <person name="Manuell A."/>
            <person name="Meier I."/>
            <person name="Mets L."/>
            <person name="Mittag M."/>
            <person name="Mittelmeier T."/>
            <person name="Moroney J.V."/>
            <person name="Moseley J."/>
            <person name="Napoli C."/>
            <person name="Nedelcu A.M."/>
            <person name="Niyogi K."/>
            <person name="Novoselov S.V."/>
            <person name="Paulsen I.T."/>
            <person name="Pazour G.J."/>
            <person name="Purton S."/>
            <person name="Ral J.P."/>
            <person name="Riano-Pachon D.M."/>
            <person name="Riekhof W."/>
            <person name="Rymarquis L."/>
            <person name="Schroda M."/>
            <person name="Stern D."/>
            <person name="Umen J."/>
            <person name="Willows R."/>
            <person name="Wilson N."/>
            <person name="Zimmer S.L."/>
            <person name="Allmer J."/>
            <person name="Balk J."/>
            <person name="Bisova K."/>
            <person name="Chen C.J."/>
            <person name="Elias M."/>
            <person name="Gendler K."/>
            <person name="Hauser C."/>
            <person name="Lamb M.R."/>
            <person name="Ledford H."/>
            <person name="Long J.C."/>
            <person name="Minagawa J."/>
            <person name="Page M.D."/>
            <person name="Pan J."/>
            <person name="Pootakham W."/>
            <person name="Roje S."/>
            <person name="Rose A."/>
            <person name="Stahlberg E."/>
            <person name="Terauchi A.M."/>
            <person name="Yang P."/>
            <person name="Ball S."/>
            <person name="Bowler C."/>
            <person name="Dieckmann C.L."/>
            <person name="Gladyshev V.N."/>
            <person name="Green P."/>
            <person name="Jorgensen R."/>
            <person name="Mayfield S."/>
            <person name="Mueller-Roeber B."/>
            <person name="Rajamani S."/>
            <person name="Sayre R.T."/>
            <person name="Brokstein P."/>
            <person name="Dubchak I."/>
            <person name="Goodstein D."/>
            <person name="Hornick L."/>
            <person name="Huang Y.W."/>
            <person name="Jhaveri J."/>
            <person name="Luo Y."/>
            <person name="Martinez D."/>
            <person name="Ngau W.C."/>
            <person name="Otillar B."/>
            <person name="Poliakov A."/>
            <person name="Porter A."/>
            <person name="Szajkowski L."/>
            <person name="Werner G."/>
            <person name="Zhou K."/>
            <person name="Grigoriev I.V."/>
            <person name="Rokhsar D.S."/>
            <person name="Grossman A.R."/>
        </authorList>
    </citation>
    <scope>NUCLEOTIDE SEQUENCE [LARGE SCALE GENOMIC DNA]</scope>
    <source>
        <strain>CC-503</strain>
    </source>
</reference>
<reference key="2">
    <citation type="journal article" date="2007" name="J. Cell Biol.">
        <title>A conserved CaM- and radial spoke associated complex mediates regulation of flagellar dynein activity.</title>
        <authorList>
            <person name="Dymek E.E."/>
            <person name="Smith E.F."/>
        </authorList>
    </citation>
    <scope>FUNCTION</scope>
    <scope>IDENTIFICATION IN A COMPLEX CONTAINING CFAP61; CFAP91 AND CFAP251</scope>
    <scope>SUBCELLULAR LOCATION</scope>
    <scope>INTERACTION WITH RSP3</scope>
    <scope>INTERACTION WITH CALMODULIN</scope>
</reference>
<evidence type="ECO:0000255" key="1"/>
<evidence type="ECO:0000256" key="2">
    <source>
        <dbReference type="SAM" id="MobiDB-lite"/>
    </source>
</evidence>
<evidence type="ECO:0000269" key="3">
    <source>
    </source>
</evidence>
<evidence type="ECO:0000303" key="4">
    <source>
    </source>
</evidence>
<evidence type="ECO:0000305" key="5"/>
<evidence type="ECO:0000312" key="6">
    <source>
        <dbReference type="EMBL" id="EDP05695.1"/>
    </source>
</evidence>
<gene>
    <name evidence="5" type="primary">CFAP91</name>
    <name evidence="4" type="synonym">FAP91</name>
    <name evidence="6" type="ORF">CHLREDRAFT_196748</name>
</gene>
<proteinExistence type="evidence at protein level"/>
<accession>A8IH47</accession>
<organism>
    <name type="scientific">Chlamydomonas reinhardtii</name>
    <name type="common">Chlamydomonas smithii</name>
    <dbReference type="NCBI Taxonomy" id="3055"/>
    <lineage>
        <taxon>Eukaryota</taxon>
        <taxon>Viridiplantae</taxon>
        <taxon>Chlorophyta</taxon>
        <taxon>core chlorophytes</taxon>
        <taxon>Chlorophyceae</taxon>
        <taxon>CS clade</taxon>
        <taxon>Chlamydomonadales</taxon>
        <taxon>Chlamydomonadaceae</taxon>
        <taxon>Chlamydomonas</taxon>
    </lineage>
</organism>
<name>CFA91_CHLRE</name>
<dbReference type="EMBL" id="DS496117">
    <property type="protein sequence ID" value="EDP05695.1"/>
    <property type="molecule type" value="Genomic_DNA"/>
</dbReference>
<dbReference type="RefSeq" id="XP_001690436.1">
    <property type="nucleotide sequence ID" value="XM_001690384.1"/>
</dbReference>
<dbReference type="SMR" id="A8IH47"/>
<dbReference type="PaxDb" id="3055-EDP05695"/>
<dbReference type="eggNOG" id="ENOG502QRFI">
    <property type="taxonomic scope" value="Eukaryota"/>
</dbReference>
<dbReference type="HOGENOM" id="CLU_294633_0_0_1"/>
<dbReference type="GO" id="GO:0005930">
    <property type="term" value="C:axoneme"/>
    <property type="evidence" value="ECO:0000314"/>
    <property type="project" value="UniProtKB"/>
</dbReference>
<dbReference type="GO" id="GO:0031514">
    <property type="term" value="C:motile cilium"/>
    <property type="evidence" value="ECO:0000314"/>
    <property type="project" value="UniProtKB"/>
</dbReference>
<dbReference type="GO" id="GO:0003341">
    <property type="term" value="P:cilium movement"/>
    <property type="evidence" value="ECO:0000314"/>
    <property type="project" value="UniProtKB"/>
</dbReference>
<dbReference type="CDD" id="cd23767">
    <property type="entry name" value="IQCD"/>
    <property type="match status" value="1"/>
</dbReference>
<dbReference type="Gene3D" id="1.20.5.190">
    <property type="match status" value="1"/>
</dbReference>
<dbReference type="InterPro" id="IPR026720">
    <property type="entry name" value="CFAP91"/>
</dbReference>
<dbReference type="InterPro" id="IPR032840">
    <property type="entry name" value="CFAP91_dom"/>
</dbReference>
<dbReference type="InterPro" id="IPR000048">
    <property type="entry name" value="IQ_motif_EF-hand-BS"/>
</dbReference>
<dbReference type="PANTHER" id="PTHR22455">
    <property type="entry name" value="CILIA- AND FLAGELLA-ASSOCIATED PROTEIN 91"/>
    <property type="match status" value="1"/>
</dbReference>
<dbReference type="PANTHER" id="PTHR22455:SF10">
    <property type="entry name" value="CILIA- AND FLAGELLA-ASSOCIATED PROTEIN 91"/>
    <property type="match status" value="1"/>
</dbReference>
<dbReference type="Pfam" id="PF14738">
    <property type="entry name" value="CFAP91"/>
    <property type="match status" value="1"/>
</dbReference>
<dbReference type="Pfam" id="PF00612">
    <property type="entry name" value="IQ"/>
    <property type="match status" value="2"/>
</dbReference>
<dbReference type="SMART" id="SM00015">
    <property type="entry name" value="IQ"/>
    <property type="match status" value="3"/>
</dbReference>
<dbReference type="PROSITE" id="PS50096">
    <property type="entry name" value="IQ"/>
    <property type="match status" value="2"/>
</dbReference>
<protein>
    <recommendedName>
        <fullName evidence="5">Cilia- and flagella-associated protein 91</fullName>
    </recommendedName>
    <alternativeName>
        <fullName evidence="5">Flagellar-associated protein 91</fullName>
    </alternativeName>
</protein>